<gene>
    <name type="primary">SAPK2</name>
    <name type="ordered locus">Os07g0622000</name>
    <name type="ordered locus">LOC_Os07g42940</name>
    <name evidence="9" type="ORF">OsJ_25167</name>
    <name type="ORF">P0594D10.134</name>
</gene>
<sequence length="339" mass="38538">MERYEVIKDIGSGNFGVAKLVRDVRTKELFAVKFIERGQKIDENVQREIMNHRSLRHPNIVRFKEVVLTPTHLAIVMEYAAGGELFERICSAGRFSEDEARFFFQQLISGVSYCHSMQICHRDLKLENTLLDGSIAPRLKICDFGYSKSSLLHSQPKSTVGTPAYIAPEVLARKEYDGKVADVWSCGVTLYVMLVGAYPFEDPDEPRNFRKTITRILSVQYMVPDYVRVSMECRHLLSRIFVANPEQRITIPEIKNHPWFLKNLPIEMTDEYQMSVQMNDINTPSQGLEEIMAIIQEARKPGDGSKFSGQIPGLGSMELDDVDTDDIDVEDSGDFVCAL</sequence>
<feature type="chain" id="PRO_0000086629" description="Serine/threonine-protein kinase SAPK2">
    <location>
        <begin position="1"/>
        <end position="339"/>
    </location>
</feature>
<feature type="domain" description="Protein kinase" evidence="1">
    <location>
        <begin position="4"/>
        <end position="260"/>
    </location>
</feature>
<feature type="region of interest" description="C-terminal">
    <location>
        <begin position="253"/>
        <end position="339"/>
    </location>
</feature>
<feature type="active site" description="Proton acceptor" evidence="1 2">
    <location>
        <position position="123"/>
    </location>
</feature>
<feature type="binding site" evidence="1">
    <location>
        <begin position="10"/>
        <end position="18"/>
    </location>
    <ligand>
        <name>ATP</name>
        <dbReference type="ChEBI" id="CHEBI:30616"/>
    </ligand>
</feature>
<feature type="binding site" evidence="1">
    <location>
        <position position="33"/>
    </location>
    <ligand>
        <name>ATP</name>
        <dbReference type="ChEBI" id="CHEBI:30616"/>
    </ligand>
</feature>
<dbReference type="EC" id="2.7.11.1"/>
<dbReference type="EMBL" id="AB125303">
    <property type="protein sequence ID" value="BAD17998.1"/>
    <property type="molecule type" value="mRNA"/>
</dbReference>
<dbReference type="EMBL" id="JF733760">
    <property type="protein sequence ID" value="AEF00931.1"/>
    <property type="molecule type" value="mRNA"/>
</dbReference>
<dbReference type="EMBL" id="AP004380">
    <property type="protein sequence ID" value="BAC10192.1"/>
    <property type="molecule type" value="Genomic_DNA"/>
</dbReference>
<dbReference type="EMBL" id="AP008213">
    <property type="protein sequence ID" value="BAF22226.1"/>
    <property type="molecule type" value="Genomic_DNA"/>
</dbReference>
<dbReference type="EMBL" id="AP014963">
    <property type="protein sequence ID" value="BAT02704.1"/>
    <property type="molecule type" value="Genomic_DNA"/>
</dbReference>
<dbReference type="EMBL" id="CM000144">
    <property type="protein sequence ID" value="EEE67612.1"/>
    <property type="molecule type" value="Genomic_DNA"/>
</dbReference>
<dbReference type="EMBL" id="AK070965">
    <property type="protein sequence ID" value="BAG92231.1"/>
    <property type="molecule type" value="mRNA"/>
</dbReference>
<dbReference type="RefSeq" id="XP_015646374.1">
    <property type="nucleotide sequence ID" value="XM_015790888.1"/>
</dbReference>
<dbReference type="SMR" id="Q0D4J7"/>
<dbReference type="FunCoup" id="Q0D4J7">
    <property type="interactions" value="536"/>
</dbReference>
<dbReference type="STRING" id="39947.Q0D4J7"/>
<dbReference type="PaxDb" id="39947-Q0D4J7"/>
<dbReference type="EnsemblPlants" id="Os07t0622000-01">
    <property type="protein sequence ID" value="Os07t0622000-01"/>
    <property type="gene ID" value="Os07g0622000"/>
</dbReference>
<dbReference type="Gramene" id="Os07t0622000-01">
    <property type="protein sequence ID" value="Os07t0622000-01"/>
    <property type="gene ID" value="Os07g0622000"/>
</dbReference>
<dbReference type="KEGG" id="dosa:Os07g0622000"/>
<dbReference type="eggNOG" id="KOG0583">
    <property type="taxonomic scope" value="Eukaryota"/>
</dbReference>
<dbReference type="HOGENOM" id="CLU_000288_63_0_1"/>
<dbReference type="InParanoid" id="Q0D4J7"/>
<dbReference type="OMA" id="ISANFRV"/>
<dbReference type="OrthoDB" id="193931at2759"/>
<dbReference type="Proteomes" id="UP000000763">
    <property type="component" value="Chromosome 7"/>
</dbReference>
<dbReference type="Proteomes" id="UP000007752">
    <property type="component" value="Chromosome 7"/>
</dbReference>
<dbReference type="Proteomes" id="UP000059680">
    <property type="component" value="Chromosome 7"/>
</dbReference>
<dbReference type="GO" id="GO:0005737">
    <property type="term" value="C:cytoplasm"/>
    <property type="evidence" value="ECO:0000314"/>
    <property type="project" value="UniProtKB"/>
</dbReference>
<dbReference type="GO" id="GO:0005634">
    <property type="term" value="C:nucleus"/>
    <property type="evidence" value="ECO:0000314"/>
    <property type="project" value="UniProtKB"/>
</dbReference>
<dbReference type="GO" id="GO:0005524">
    <property type="term" value="F:ATP binding"/>
    <property type="evidence" value="ECO:0007669"/>
    <property type="project" value="UniProtKB-KW"/>
</dbReference>
<dbReference type="GO" id="GO:0106310">
    <property type="term" value="F:protein serine kinase activity"/>
    <property type="evidence" value="ECO:0007669"/>
    <property type="project" value="RHEA"/>
</dbReference>
<dbReference type="GO" id="GO:0004674">
    <property type="term" value="F:protein serine/threonine kinase activity"/>
    <property type="evidence" value="ECO:0000314"/>
    <property type="project" value="UniProtKB"/>
</dbReference>
<dbReference type="GO" id="GO:0009738">
    <property type="term" value="P:abscisic acid-activated signaling pathway"/>
    <property type="evidence" value="ECO:0000315"/>
    <property type="project" value="UniProtKB"/>
</dbReference>
<dbReference type="GO" id="GO:0006468">
    <property type="term" value="P:protein phosphorylation"/>
    <property type="evidence" value="ECO:0000314"/>
    <property type="project" value="UniProtKB"/>
</dbReference>
<dbReference type="GO" id="GO:0009845">
    <property type="term" value="P:seed germination"/>
    <property type="evidence" value="ECO:0000315"/>
    <property type="project" value="UniProtKB"/>
</dbReference>
<dbReference type="GO" id="GO:0090351">
    <property type="term" value="P:seedling development"/>
    <property type="evidence" value="ECO:0000315"/>
    <property type="project" value="UniProtKB"/>
</dbReference>
<dbReference type="CDD" id="cd14662">
    <property type="entry name" value="STKc_SnRK2"/>
    <property type="match status" value="1"/>
</dbReference>
<dbReference type="FunFam" id="3.30.200.20:FF:000237">
    <property type="entry name" value="Serine/threonine-protein kinase SAPK2"/>
    <property type="match status" value="1"/>
</dbReference>
<dbReference type="FunFam" id="1.10.510.10:FF:000085">
    <property type="entry name" value="Serine/threonine-protein kinase SRK2E"/>
    <property type="match status" value="1"/>
</dbReference>
<dbReference type="Gene3D" id="3.30.200.20">
    <property type="entry name" value="Phosphorylase Kinase, domain 1"/>
    <property type="match status" value="1"/>
</dbReference>
<dbReference type="Gene3D" id="1.10.510.10">
    <property type="entry name" value="Transferase(Phosphotransferase) domain 1"/>
    <property type="match status" value="1"/>
</dbReference>
<dbReference type="InterPro" id="IPR011009">
    <property type="entry name" value="Kinase-like_dom_sf"/>
</dbReference>
<dbReference type="InterPro" id="IPR000719">
    <property type="entry name" value="Prot_kinase_dom"/>
</dbReference>
<dbReference type="InterPro" id="IPR017441">
    <property type="entry name" value="Protein_kinase_ATP_BS"/>
</dbReference>
<dbReference type="InterPro" id="IPR008271">
    <property type="entry name" value="Ser/Thr_kinase_AS"/>
</dbReference>
<dbReference type="PANTHER" id="PTHR24343">
    <property type="entry name" value="SERINE/THREONINE KINASE"/>
    <property type="match status" value="1"/>
</dbReference>
<dbReference type="PANTHER" id="PTHR24343:SF542">
    <property type="entry name" value="SERINE_THREONINE-PROTEIN KINASE SAPK2"/>
    <property type="match status" value="1"/>
</dbReference>
<dbReference type="Pfam" id="PF00069">
    <property type="entry name" value="Pkinase"/>
    <property type="match status" value="1"/>
</dbReference>
<dbReference type="SMART" id="SM00220">
    <property type="entry name" value="S_TKc"/>
    <property type="match status" value="1"/>
</dbReference>
<dbReference type="SUPFAM" id="SSF56112">
    <property type="entry name" value="Protein kinase-like (PK-like)"/>
    <property type="match status" value="1"/>
</dbReference>
<dbReference type="PROSITE" id="PS00107">
    <property type="entry name" value="PROTEIN_KINASE_ATP"/>
    <property type="match status" value="1"/>
</dbReference>
<dbReference type="PROSITE" id="PS50011">
    <property type="entry name" value="PROTEIN_KINASE_DOM"/>
    <property type="match status" value="1"/>
</dbReference>
<dbReference type="PROSITE" id="PS00108">
    <property type="entry name" value="PROTEIN_KINASE_ST"/>
    <property type="match status" value="1"/>
</dbReference>
<proteinExistence type="evidence at protein level"/>
<evidence type="ECO:0000255" key="1">
    <source>
        <dbReference type="PROSITE-ProRule" id="PRU00159"/>
    </source>
</evidence>
<evidence type="ECO:0000255" key="2">
    <source>
        <dbReference type="PROSITE-ProRule" id="PRU10027"/>
    </source>
</evidence>
<evidence type="ECO:0000269" key="3">
    <source>
    </source>
</evidence>
<evidence type="ECO:0000269" key="4">
    <source>
    </source>
</evidence>
<evidence type="ECO:0000269" key="5">
    <source>
    </source>
</evidence>
<evidence type="ECO:0000269" key="6">
    <source>
    </source>
</evidence>
<evidence type="ECO:0000303" key="7">
    <source ref="2"/>
</evidence>
<evidence type="ECO:0000305" key="8"/>
<evidence type="ECO:0000312" key="9">
    <source>
        <dbReference type="EMBL" id="EEE67612.1"/>
    </source>
</evidence>
<name>SAPK2_ORYSJ</name>
<keyword id="KW-0938">Abscisic acid signaling pathway</keyword>
<keyword id="KW-0067">ATP-binding</keyword>
<keyword id="KW-0963">Cytoplasm</keyword>
<keyword id="KW-0418">Kinase</keyword>
<keyword id="KW-0547">Nucleotide-binding</keyword>
<keyword id="KW-0539">Nucleus</keyword>
<keyword id="KW-0597">Phosphoprotein</keyword>
<keyword id="KW-1185">Reference proteome</keyword>
<keyword id="KW-0723">Serine/threonine-protein kinase</keyword>
<keyword id="KW-0346">Stress response</keyword>
<keyword id="KW-0808">Transferase</keyword>
<accession>Q0D4J7</accession>
<accession>B7EIN4</accession>
<accession>Q84TC6</accession>
<accession>Q8LH98</accession>
<reference key="1">
    <citation type="journal article" date="2004" name="Plant Cell">
        <title>Differential activation of the rice sucrose nonfermenting1-related protein kinase2 family by hyperosmotic stress and abscisic acid.</title>
        <authorList>
            <person name="Kobayashi Y."/>
            <person name="Yamamoto S."/>
            <person name="Minami H."/>
            <person name="Kagaya Y."/>
            <person name="Hattori T."/>
        </authorList>
    </citation>
    <scope>NUCLEOTIDE SEQUENCE [MRNA]</scope>
    <scope>ACTIVITY REGULATION</scope>
    <scope>PHOSPHORYLATION</scope>
    <scope>TISSUE SPECIFICITY</scope>
    <scope>INDUCTION</scope>
    <scope>DOMAIN</scope>
    <scope>NOMENCLATURE</scope>
    <source>
        <strain>cv. Nipponbare</strain>
    </source>
</reference>
<reference key="2">
    <citation type="journal article" date="2013" name="Plant Mol. Biol. Rep.">
        <title>Genome-wide phylogenetic analysis of stress-activated protein kinase genes in rice (OsSAPKs) and expression profiling in response to Xanthomonas oryzae pv. oryzicola infection.</title>
        <authorList>
            <person name="Xu M.-R."/>
            <person name="Huang L.-Y."/>
            <person name="Zhang F."/>
            <person name="Zhu L.-H."/>
            <person name="Zhou Y.-L."/>
            <person name="Li Z.-K."/>
        </authorList>
    </citation>
    <scope>NUCLEOTIDE SEQUENCE [MRNA]</scope>
</reference>
<reference key="3">
    <citation type="journal article" date="2005" name="Nature">
        <title>The map-based sequence of the rice genome.</title>
        <authorList>
            <consortium name="International rice genome sequencing project (IRGSP)"/>
        </authorList>
    </citation>
    <scope>NUCLEOTIDE SEQUENCE [LARGE SCALE GENOMIC DNA]</scope>
    <source>
        <strain>cv. Nipponbare</strain>
    </source>
</reference>
<reference key="4">
    <citation type="journal article" date="2008" name="Nucleic Acids Res.">
        <title>The rice annotation project database (RAP-DB): 2008 update.</title>
        <authorList>
            <consortium name="The rice annotation project (RAP)"/>
        </authorList>
    </citation>
    <scope>GENOME REANNOTATION</scope>
    <source>
        <strain>cv. Nipponbare</strain>
    </source>
</reference>
<reference key="5">
    <citation type="journal article" date="2013" name="Rice">
        <title>Improvement of the Oryza sativa Nipponbare reference genome using next generation sequence and optical map data.</title>
        <authorList>
            <person name="Kawahara Y."/>
            <person name="de la Bastide M."/>
            <person name="Hamilton J.P."/>
            <person name="Kanamori H."/>
            <person name="McCombie W.R."/>
            <person name="Ouyang S."/>
            <person name="Schwartz D.C."/>
            <person name="Tanaka T."/>
            <person name="Wu J."/>
            <person name="Zhou S."/>
            <person name="Childs K.L."/>
            <person name="Davidson R.M."/>
            <person name="Lin H."/>
            <person name="Quesada-Ocampo L."/>
            <person name="Vaillancourt B."/>
            <person name="Sakai H."/>
            <person name="Lee S.S."/>
            <person name="Kim J."/>
            <person name="Numa H."/>
            <person name="Itoh T."/>
            <person name="Buell C.R."/>
            <person name="Matsumoto T."/>
        </authorList>
    </citation>
    <scope>GENOME REANNOTATION</scope>
    <source>
        <strain>cv. Nipponbare</strain>
    </source>
</reference>
<reference key="6">
    <citation type="journal article" date="2005" name="PLoS Biol.">
        <title>The genomes of Oryza sativa: a history of duplications.</title>
        <authorList>
            <person name="Yu J."/>
            <person name="Wang J."/>
            <person name="Lin W."/>
            <person name="Li S."/>
            <person name="Li H."/>
            <person name="Zhou J."/>
            <person name="Ni P."/>
            <person name="Dong W."/>
            <person name="Hu S."/>
            <person name="Zeng C."/>
            <person name="Zhang J."/>
            <person name="Zhang Y."/>
            <person name="Li R."/>
            <person name="Xu Z."/>
            <person name="Li S."/>
            <person name="Li X."/>
            <person name="Zheng H."/>
            <person name="Cong L."/>
            <person name="Lin L."/>
            <person name="Yin J."/>
            <person name="Geng J."/>
            <person name="Li G."/>
            <person name="Shi J."/>
            <person name="Liu J."/>
            <person name="Lv H."/>
            <person name="Li J."/>
            <person name="Wang J."/>
            <person name="Deng Y."/>
            <person name="Ran L."/>
            <person name="Shi X."/>
            <person name="Wang X."/>
            <person name="Wu Q."/>
            <person name="Li C."/>
            <person name="Ren X."/>
            <person name="Wang J."/>
            <person name="Wang X."/>
            <person name="Li D."/>
            <person name="Liu D."/>
            <person name="Zhang X."/>
            <person name="Ji Z."/>
            <person name="Zhao W."/>
            <person name="Sun Y."/>
            <person name="Zhang Z."/>
            <person name="Bao J."/>
            <person name="Han Y."/>
            <person name="Dong L."/>
            <person name="Ji J."/>
            <person name="Chen P."/>
            <person name="Wu S."/>
            <person name="Liu J."/>
            <person name="Xiao Y."/>
            <person name="Bu D."/>
            <person name="Tan J."/>
            <person name="Yang L."/>
            <person name="Ye C."/>
            <person name="Zhang J."/>
            <person name="Xu J."/>
            <person name="Zhou Y."/>
            <person name="Yu Y."/>
            <person name="Zhang B."/>
            <person name="Zhuang S."/>
            <person name="Wei H."/>
            <person name="Liu B."/>
            <person name="Lei M."/>
            <person name="Yu H."/>
            <person name="Li Y."/>
            <person name="Xu H."/>
            <person name="Wei S."/>
            <person name="He X."/>
            <person name="Fang L."/>
            <person name="Zhang Z."/>
            <person name="Zhang Y."/>
            <person name="Huang X."/>
            <person name="Su Z."/>
            <person name="Tong W."/>
            <person name="Li J."/>
            <person name="Tong Z."/>
            <person name="Li S."/>
            <person name="Ye J."/>
            <person name="Wang L."/>
            <person name="Fang L."/>
            <person name="Lei T."/>
            <person name="Chen C.-S."/>
            <person name="Chen H.-C."/>
            <person name="Xu Z."/>
            <person name="Li H."/>
            <person name="Huang H."/>
            <person name="Zhang F."/>
            <person name="Xu H."/>
            <person name="Li N."/>
            <person name="Zhao C."/>
            <person name="Li S."/>
            <person name="Dong L."/>
            <person name="Huang Y."/>
            <person name="Li L."/>
            <person name="Xi Y."/>
            <person name="Qi Q."/>
            <person name="Li W."/>
            <person name="Zhang B."/>
            <person name="Hu W."/>
            <person name="Zhang Y."/>
            <person name="Tian X."/>
            <person name="Jiao Y."/>
            <person name="Liang X."/>
            <person name="Jin J."/>
            <person name="Gao L."/>
            <person name="Zheng W."/>
            <person name="Hao B."/>
            <person name="Liu S.-M."/>
            <person name="Wang W."/>
            <person name="Yuan L."/>
            <person name="Cao M."/>
            <person name="McDermott J."/>
            <person name="Samudrala R."/>
            <person name="Wang J."/>
            <person name="Wong G.K.-S."/>
            <person name="Yang H."/>
        </authorList>
    </citation>
    <scope>NUCLEOTIDE SEQUENCE [LARGE SCALE GENOMIC DNA]</scope>
    <source>
        <strain>cv. Nipponbare</strain>
    </source>
</reference>
<reference key="7">
    <citation type="journal article" date="2003" name="Science">
        <title>Collection, mapping, and annotation of over 28,000 cDNA clones from japonica rice.</title>
        <authorList>
            <consortium name="The rice full-length cDNA consortium"/>
        </authorList>
    </citation>
    <scope>NUCLEOTIDE SEQUENCE [LARGE SCALE MRNA]</scope>
    <source>
        <strain>cv. Nipponbare</strain>
    </source>
</reference>
<reference key="8">
    <citation type="journal article" date="2012" name="J. Exp. Bot.">
        <title>A rice orthologue of the ABA receptor, OsPYL/RCAR5, is a positive regulator of the ABA signal transduction pathway in seed germination and early seedling growth.</title>
        <authorList>
            <person name="Kim H."/>
            <person name="Hwang H."/>
            <person name="Hong J.W."/>
            <person name="Lee Y.N."/>
            <person name="Ahn I.P."/>
            <person name="Yoon I.S."/>
            <person name="Yoo S.D."/>
            <person name="Lee S."/>
            <person name="Lee S.C."/>
            <person name="Kim B.G."/>
        </authorList>
    </citation>
    <scope>FUNCTION</scope>
    <scope>INTERACTION WITH ABI5 AND PP2C30</scope>
    <scope>SUBCELLULAR LOCATION</scope>
    <scope>INDUCTION BY ABSCISIC ACID</scope>
</reference>
<reference key="9">
    <citation type="journal article" date="2012" name="Plant Physiol.">
        <title>Constitutive activation of transcription factor OsbZIP46 improves drought tolerance in rice.</title>
        <authorList>
            <person name="Tang N."/>
            <person name="Zhang H."/>
            <person name="Li X."/>
            <person name="Xiao J."/>
            <person name="Xiong L."/>
        </authorList>
    </citation>
    <scope>FUNCTION</scope>
    <scope>INTERACTION WITH BZIP46</scope>
</reference>
<reference key="10">
    <citation type="journal article" date="2017" name="Plant Mol. Biol.">
        <title>The protein phosphatase 2C clade A protein OsPP2C51 positively regulates seed germination by directly inactivating OsbZIP10.</title>
        <authorList>
            <person name="Bhatnagar N."/>
            <person name="Min M.K."/>
            <person name="Choi E.H."/>
            <person name="Kim N."/>
            <person name="Moon S.J."/>
            <person name="Yoon I."/>
            <person name="Kwon T."/>
            <person name="Jung K.H."/>
            <person name="Kim B.G."/>
        </authorList>
    </citation>
    <scope>INTERACTION WITH PP2C51</scope>
    <scope>SUBCELLULAR LOCATION</scope>
</reference>
<organism>
    <name type="scientific">Oryza sativa subsp. japonica</name>
    <name type="common">Rice</name>
    <dbReference type="NCBI Taxonomy" id="39947"/>
    <lineage>
        <taxon>Eukaryota</taxon>
        <taxon>Viridiplantae</taxon>
        <taxon>Streptophyta</taxon>
        <taxon>Embryophyta</taxon>
        <taxon>Tracheophyta</taxon>
        <taxon>Spermatophyta</taxon>
        <taxon>Magnoliopsida</taxon>
        <taxon>Liliopsida</taxon>
        <taxon>Poales</taxon>
        <taxon>Poaceae</taxon>
        <taxon>BOP clade</taxon>
        <taxon>Oryzoideae</taxon>
        <taxon>Oryzeae</taxon>
        <taxon>Oryzinae</taxon>
        <taxon>Oryza</taxon>
        <taxon>Oryza sativa</taxon>
    </lineage>
</organism>
<comment type="function">
    <text evidence="4 5 8">May play a role in signal transduction of hyperosmotic response (Probable). Can phosphorylate BZIP46 in vitro (PubMed:22301130). Together with ABI5, PP2C30 and PYL5, is part of an abscisic acid (ABA) signaling unit that modulates seed germination and early seedling growth (PubMed:22071266).</text>
</comment>
<comment type="catalytic activity">
    <reaction>
        <text>L-seryl-[protein] + ATP = O-phospho-L-seryl-[protein] + ADP + H(+)</text>
        <dbReference type="Rhea" id="RHEA:17989"/>
        <dbReference type="Rhea" id="RHEA-COMP:9863"/>
        <dbReference type="Rhea" id="RHEA-COMP:11604"/>
        <dbReference type="ChEBI" id="CHEBI:15378"/>
        <dbReference type="ChEBI" id="CHEBI:29999"/>
        <dbReference type="ChEBI" id="CHEBI:30616"/>
        <dbReference type="ChEBI" id="CHEBI:83421"/>
        <dbReference type="ChEBI" id="CHEBI:456216"/>
        <dbReference type="EC" id="2.7.11.1"/>
    </reaction>
</comment>
<comment type="catalytic activity">
    <reaction>
        <text>L-threonyl-[protein] + ATP = O-phospho-L-threonyl-[protein] + ADP + H(+)</text>
        <dbReference type="Rhea" id="RHEA:46608"/>
        <dbReference type="Rhea" id="RHEA-COMP:11060"/>
        <dbReference type="Rhea" id="RHEA-COMP:11605"/>
        <dbReference type="ChEBI" id="CHEBI:15378"/>
        <dbReference type="ChEBI" id="CHEBI:30013"/>
        <dbReference type="ChEBI" id="CHEBI:30616"/>
        <dbReference type="ChEBI" id="CHEBI:61977"/>
        <dbReference type="ChEBI" id="CHEBI:456216"/>
        <dbReference type="EC" id="2.7.11.1"/>
    </reaction>
</comment>
<comment type="activity regulation">
    <text evidence="3">Activated by phosphorylation in response to hyperosmotic stress within 5 minutes.</text>
</comment>
<comment type="subunit">
    <text evidence="4 5 6">Interacts with BZIP46 (PubMed:22301130). Interacts with ABI5 and PP2C30 (PubMed:22071266). Interacts with PP2C51 (PubMed:28000033).</text>
</comment>
<comment type="subcellular location">
    <subcellularLocation>
        <location evidence="4">Cytoplasm</location>
    </subcellularLocation>
    <subcellularLocation>
        <location evidence="4 6">Nucleus</location>
    </subcellularLocation>
</comment>
<comment type="tissue specificity">
    <text evidence="3">Expressed in leaf blades, leaf sheaths and roots. Expressed in shoots and roots of young seedlings.</text>
</comment>
<comment type="induction">
    <text evidence="3 4">By hyperosmotic stress in leaf blades and leaf sheaths, but not in roots (PubMed:15084714). Induced by abscisic acid (ABA) (PubMed:22071266).</text>
</comment>
<comment type="domain">
    <text evidence="3">The C-terminal region is necessary for the kinase activation in response to hyperosmotic stress.</text>
</comment>
<comment type="PTM">
    <text evidence="3">Phosphorylated.</text>
</comment>
<comment type="similarity">
    <text evidence="1">Belongs to the protein kinase superfamily. Ser/Thr protein kinase family.</text>
</comment>
<protein>
    <recommendedName>
        <fullName>Serine/threonine-protein kinase SAPK2</fullName>
        <ecNumber>2.7.11.1</ecNumber>
    </recommendedName>
    <alternativeName>
        <fullName>Osmotic stress/abscisic acid-activated protein kinase 2</fullName>
    </alternativeName>
    <alternativeName>
        <fullName evidence="7">stress-activated protein kinase 2</fullName>
        <shortName evidence="7">OsSAPK2</shortName>
    </alternativeName>
</protein>